<accession>Q7MLE8</accession>
<sequence length="342" mass="38847">MTNSLFRQSFLSDTLNMQQSVEAKATTLSNGVRLQLHQRGVLEVIPANNSAETKNIILSSGIHGDETAPMELIDKIVHDIETGFQDVQARCLFIIAHPEATNAHTRFIEENLNRLFDEKEHQPSKELVIADQLKLLVKAFFDNTPVESRWHLDLHCAIRASKHYSFAISPKTRHPTRSKALVDFVNHSHVEALLLSNSPSSTFSWFSAEYYSAQALTMELGRVARIGENDLSRFTALDLTMRDLIAEVTPEHLPKPAITYRVSRTIVRLHQDFDFRFDDQVENFTSFMHGEVFGHDGDKPLMAKNDNEAIVFPNRNVAIGQRAALMVCEIKARFEDDQLVYD</sequence>
<reference key="1">
    <citation type="journal article" date="2003" name="Genome Res.">
        <title>Comparative genome analysis of Vibrio vulnificus, a marine pathogen.</title>
        <authorList>
            <person name="Chen C.-Y."/>
            <person name="Wu K.-M."/>
            <person name="Chang Y.-C."/>
            <person name="Chang C.-H."/>
            <person name="Tsai H.-C."/>
            <person name="Liao T.-L."/>
            <person name="Liu Y.-M."/>
            <person name="Chen H.-J."/>
            <person name="Shen A.B.-T."/>
            <person name="Li J.-C."/>
            <person name="Su T.-L."/>
            <person name="Shao C.-P."/>
            <person name="Lee C.-T."/>
            <person name="Hor L.-I."/>
            <person name="Tsai S.-F."/>
        </authorList>
    </citation>
    <scope>NUCLEOTIDE SEQUENCE [LARGE SCALE GENOMIC DNA]</scope>
    <source>
        <strain>YJ016</strain>
    </source>
</reference>
<protein>
    <recommendedName>
        <fullName evidence="1">Succinylglutamate desuccinylase</fullName>
        <ecNumber evidence="1">3.5.1.96</ecNumber>
    </recommendedName>
</protein>
<dbReference type="EC" id="3.5.1.96" evidence="1"/>
<dbReference type="EMBL" id="BA000037">
    <property type="protein sequence ID" value="BAC94243.1"/>
    <property type="molecule type" value="Genomic_DNA"/>
</dbReference>
<dbReference type="RefSeq" id="WP_011150118.1">
    <property type="nucleotide sequence ID" value="NC_005139.1"/>
</dbReference>
<dbReference type="SMR" id="Q7MLE8"/>
<dbReference type="STRING" id="672.VV93_v1c13890"/>
<dbReference type="KEGG" id="vvy:VV1479"/>
<dbReference type="PATRIC" id="fig|196600.6.peg.1464"/>
<dbReference type="eggNOG" id="COG2988">
    <property type="taxonomic scope" value="Bacteria"/>
</dbReference>
<dbReference type="HOGENOM" id="CLU_071608_0_0_6"/>
<dbReference type="UniPathway" id="UPA00185">
    <property type="reaction ID" value="UER00283"/>
</dbReference>
<dbReference type="Proteomes" id="UP000002675">
    <property type="component" value="Chromosome I"/>
</dbReference>
<dbReference type="GO" id="GO:0016788">
    <property type="term" value="F:hydrolase activity, acting on ester bonds"/>
    <property type="evidence" value="ECO:0007669"/>
    <property type="project" value="UniProtKB-UniRule"/>
</dbReference>
<dbReference type="GO" id="GO:0009017">
    <property type="term" value="F:succinylglutamate desuccinylase activity"/>
    <property type="evidence" value="ECO:0007669"/>
    <property type="project" value="UniProtKB-EC"/>
</dbReference>
<dbReference type="GO" id="GO:0008270">
    <property type="term" value="F:zinc ion binding"/>
    <property type="evidence" value="ECO:0007669"/>
    <property type="project" value="UniProtKB-UniRule"/>
</dbReference>
<dbReference type="GO" id="GO:0019544">
    <property type="term" value="P:arginine catabolic process to glutamate"/>
    <property type="evidence" value="ECO:0007669"/>
    <property type="project" value="UniProtKB-UniRule"/>
</dbReference>
<dbReference type="GO" id="GO:0019545">
    <property type="term" value="P:arginine catabolic process to succinate"/>
    <property type="evidence" value="ECO:0007669"/>
    <property type="project" value="UniProtKB-UniRule"/>
</dbReference>
<dbReference type="CDD" id="cd03855">
    <property type="entry name" value="M14_ASTE"/>
    <property type="match status" value="1"/>
</dbReference>
<dbReference type="Gene3D" id="3.40.630.10">
    <property type="entry name" value="Zn peptidases"/>
    <property type="match status" value="1"/>
</dbReference>
<dbReference type="HAMAP" id="MF_00767">
    <property type="entry name" value="Arg_catab_AstE"/>
    <property type="match status" value="1"/>
</dbReference>
<dbReference type="InterPro" id="IPR050178">
    <property type="entry name" value="AspA/AstE_fam"/>
</dbReference>
<dbReference type="InterPro" id="IPR055438">
    <property type="entry name" value="AstE_AspA_cat"/>
</dbReference>
<dbReference type="InterPro" id="IPR007036">
    <property type="entry name" value="Aste_AspA_hybrid_dom"/>
</dbReference>
<dbReference type="InterPro" id="IPR016681">
    <property type="entry name" value="SuccinylGlu_desuccinylase"/>
</dbReference>
<dbReference type="NCBIfam" id="NF003706">
    <property type="entry name" value="PRK05324.1"/>
    <property type="match status" value="1"/>
</dbReference>
<dbReference type="PANTHER" id="PTHR15162">
    <property type="entry name" value="ASPARTOACYLASE"/>
    <property type="match status" value="1"/>
</dbReference>
<dbReference type="PANTHER" id="PTHR15162:SF7">
    <property type="entry name" value="SUCCINYLGLUTAMATE DESUCCINYLASE"/>
    <property type="match status" value="1"/>
</dbReference>
<dbReference type="Pfam" id="PF24827">
    <property type="entry name" value="AstE_AspA_cat"/>
    <property type="match status" value="1"/>
</dbReference>
<dbReference type="Pfam" id="PF04952">
    <property type="entry name" value="AstE_AspA_hybrid"/>
    <property type="match status" value="1"/>
</dbReference>
<dbReference type="PIRSF" id="PIRSF017020">
    <property type="entry name" value="AstE"/>
    <property type="match status" value="1"/>
</dbReference>
<dbReference type="SUPFAM" id="SSF53187">
    <property type="entry name" value="Zn-dependent exopeptidases"/>
    <property type="match status" value="1"/>
</dbReference>
<proteinExistence type="inferred from homology"/>
<name>ASTE_VIBVY</name>
<feature type="chain" id="PRO_0000174653" description="Succinylglutamate desuccinylase">
    <location>
        <begin position="1"/>
        <end position="342"/>
    </location>
</feature>
<feature type="active site" evidence="1">
    <location>
        <position position="219"/>
    </location>
</feature>
<feature type="binding site" evidence="1">
    <location>
        <position position="63"/>
    </location>
    <ligand>
        <name>Zn(2+)</name>
        <dbReference type="ChEBI" id="CHEBI:29105"/>
    </ligand>
</feature>
<feature type="binding site" evidence="1">
    <location>
        <position position="66"/>
    </location>
    <ligand>
        <name>Zn(2+)</name>
        <dbReference type="ChEBI" id="CHEBI:29105"/>
    </ligand>
</feature>
<feature type="binding site" evidence="1">
    <location>
        <position position="155"/>
    </location>
    <ligand>
        <name>Zn(2+)</name>
        <dbReference type="ChEBI" id="CHEBI:29105"/>
    </ligand>
</feature>
<gene>
    <name evidence="1" type="primary">astE</name>
    <name type="ordered locus">VV1479</name>
</gene>
<keyword id="KW-0056">Arginine metabolism</keyword>
<keyword id="KW-0378">Hydrolase</keyword>
<keyword id="KW-0479">Metal-binding</keyword>
<keyword id="KW-0862">Zinc</keyword>
<organism>
    <name type="scientific">Vibrio vulnificus (strain YJ016)</name>
    <dbReference type="NCBI Taxonomy" id="196600"/>
    <lineage>
        <taxon>Bacteria</taxon>
        <taxon>Pseudomonadati</taxon>
        <taxon>Pseudomonadota</taxon>
        <taxon>Gammaproteobacteria</taxon>
        <taxon>Vibrionales</taxon>
        <taxon>Vibrionaceae</taxon>
        <taxon>Vibrio</taxon>
    </lineage>
</organism>
<comment type="function">
    <text evidence="1">Transforms N(2)-succinylglutamate into succinate and glutamate.</text>
</comment>
<comment type="catalytic activity">
    <reaction evidence="1">
        <text>N-succinyl-L-glutamate + H2O = L-glutamate + succinate</text>
        <dbReference type="Rhea" id="RHEA:15169"/>
        <dbReference type="ChEBI" id="CHEBI:15377"/>
        <dbReference type="ChEBI" id="CHEBI:29985"/>
        <dbReference type="ChEBI" id="CHEBI:30031"/>
        <dbReference type="ChEBI" id="CHEBI:58763"/>
        <dbReference type="EC" id="3.5.1.96"/>
    </reaction>
</comment>
<comment type="cofactor">
    <cofactor evidence="1">
        <name>Zn(2+)</name>
        <dbReference type="ChEBI" id="CHEBI:29105"/>
    </cofactor>
    <text evidence="1">Binds 1 zinc ion per subunit.</text>
</comment>
<comment type="pathway">
    <text evidence="1">Amino-acid degradation; L-arginine degradation via AST pathway; L-glutamate and succinate from L-arginine: step 5/5.</text>
</comment>
<comment type="similarity">
    <text evidence="1">Belongs to the AspA/AstE family. Succinylglutamate desuccinylase subfamily.</text>
</comment>
<evidence type="ECO:0000255" key="1">
    <source>
        <dbReference type="HAMAP-Rule" id="MF_00767"/>
    </source>
</evidence>